<sequence length="507" mass="54575">MTVFSRPGSAGALMSYESRYQNFIGGQWVAPVHGRYFENPTPVTGQPFCEVPRSDAADIDKALDAAHAAAPGWGKTAPAERAAILNMIADRIDKNAAALAVAEVWDNGKPVREALAADIPLAVDHFRYFAAAIRAQEGALSQIDEDTVAYHFHEPLGVVGQIIPWNFPILMAAWKLAPALAAGNTAVLKPAEQTPASVLYLMSLIGDLLPPGVVNVVNGFGAEAGKPLASSDRIAKVAFTGETTTGRLIMQYASHNLIPVTLELGGKSPNIFFADVLAAHDDFCDKALEGFTMFALNQGEVCTCPSRSLIQADIYDEFLELAAIRTKAVRQGDPLDTETMLGSQASNDQLEKVLSYIEIGKQEGAVIIAGGERAELGGDLSGGYYMQPTIFTGTNNMRIFKEEIFGPVVAVTSFTDYDDAIGIANDTLYGLGAGVWSRDGNTAYRAGRDIQAGRVWVNCYHLYPAHAAFGGYKQSGIGREGHQMMLQHYQHTKNLLVSYSDKALGFF</sequence>
<keyword id="KW-0520">NAD</keyword>
<keyword id="KW-0560">Oxidoreductase</keyword>
<keyword id="KW-1185">Reference proteome</keyword>
<dbReference type="EC" id="1.2.1.3"/>
<dbReference type="EMBL" id="LT708304">
    <property type="protein sequence ID" value="SIT99061.1"/>
    <property type="molecule type" value="Genomic_DNA"/>
</dbReference>
<dbReference type="RefSeq" id="NP_854130.1">
    <property type="nucleotide sequence ID" value="NC_002945.3"/>
</dbReference>
<dbReference type="RefSeq" id="WP_003402294.1">
    <property type="nucleotide sequence ID" value="NC_002945.4"/>
</dbReference>
<dbReference type="SMR" id="P63938"/>
<dbReference type="PATRIC" id="fig|233413.5.peg.509"/>
<dbReference type="Proteomes" id="UP000001419">
    <property type="component" value="Chromosome"/>
</dbReference>
<dbReference type="GO" id="GO:0004029">
    <property type="term" value="F:aldehyde dehydrogenase (NAD+) activity"/>
    <property type="evidence" value="ECO:0007669"/>
    <property type="project" value="UniProtKB-EC"/>
</dbReference>
<dbReference type="CDD" id="cd07116">
    <property type="entry name" value="ALDH_ACDHII-AcoD"/>
    <property type="match status" value="1"/>
</dbReference>
<dbReference type="FunFam" id="3.40.605.10:FF:000001">
    <property type="entry name" value="Aldehyde dehydrogenase 1"/>
    <property type="match status" value="1"/>
</dbReference>
<dbReference type="FunFam" id="3.40.309.10:FF:000017">
    <property type="entry name" value="Aldehyde dehydrogenase B"/>
    <property type="match status" value="1"/>
</dbReference>
<dbReference type="Gene3D" id="3.40.605.10">
    <property type="entry name" value="Aldehyde Dehydrogenase, Chain A, domain 1"/>
    <property type="match status" value="1"/>
</dbReference>
<dbReference type="Gene3D" id="3.40.309.10">
    <property type="entry name" value="Aldehyde Dehydrogenase, Chain A, domain 2"/>
    <property type="match status" value="1"/>
</dbReference>
<dbReference type="InterPro" id="IPR016161">
    <property type="entry name" value="Ald_DH/histidinol_DH"/>
</dbReference>
<dbReference type="InterPro" id="IPR016163">
    <property type="entry name" value="Ald_DH_C"/>
</dbReference>
<dbReference type="InterPro" id="IPR016160">
    <property type="entry name" value="Ald_DH_CS_CYS"/>
</dbReference>
<dbReference type="InterPro" id="IPR029510">
    <property type="entry name" value="Ald_DH_CS_GLU"/>
</dbReference>
<dbReference type="InterPro" id="IPR016162">
    <property type="entry name" value="Ald_DH_N"/>
</dbReference>
<dbReference type="InterPro" id="IPR015590">
    <property type="entry name" value="Aldehyde_DH_dom"/>
</dbReference>
<dbReference type="PANTHER" id="PTHR43111">
    <property type="entry name" value="ALDEHYDE DEHYDROGENASE B-RELATED"/>
    <property type="match status" value="1"/>
</dbReference>
<dbReference type="PANTHER" id="PTHR43111:SF1">
    <property type="entry name" value="ALDEHYDE DEHYDROGENASE B-RELATED"/>
    <property type="match status" value="1"/>
</dbReference>
<dbReference type="Pfam" id="PF00171">
    <property type="entry name" value="Aldedh"/>
    <property type="match status" value="1"/>
</dbReference>
<dbReference type="SUPFAM" id="SSF53720">
    <property type="entry name" value="ALDH-like"/>
    <property type="match status" value="1"/>
</dbReference>
<dbReference type="PROSITE" id="PS00070">
    <property type="entry name" value="ALDEHYDE_DEHYDR_CYS"/>
    <property type="match status" value="1"/>
</dbReference>
<dbReference type="PROSITE" id="PS00687">
    <property type="entry name" value="ALDEHYDE_DEHYDR_GLU"/>
    <property type="match status" value="1"/>
</dbReference>
<protein>
    <recommendedName>
        <fullName>Probable aldehyde dehydrogenase</fullName>
        <ecNumber>1.2.1.3</ecNumber>
    </recommendedName>
</protein>
<feature type="chain" id="PRO_0000056450" description="Probable aldehyde dehydrogenase">
    <location>
        <begin position="1"/>
        <end position="507"/>
    </location>
</feature>
<feature type="active site" evidence="1">
    <location>
        <position position="263"/>
    </location>
</feature>
<feature type="active site" evidence="1">
    <location>
        <position position="302"/>
    </location>
</feature>
<feature type="binding site" evidence="1">
    <location>
        <begin position="219"/>
        <end position="225"/>
    </location>
    <ligand>
        <name>NAD(+)</name>
        <dbReference type="ChEBI" id="CHEBI:57540"/>
    </ligand>
</feature>
<organism>
    <name type="scientific">Mycobacterium bovis (strain ATCC BAA-935 / AF2122/97)</name>
    <dbReference type="NCBI Taxonomy" id="233413"/>
    <lineage>
        <taxon>Bacteria</taxon>
        <taxon>Bacillati</taxon>
        <taxon>Actinomycetota</taxon>
        <taxon>Actinomycetes</taxon>
        <taxon>Mycobacteriales</taxon>
        <taxon>Mycobacteriaceae</taxon>
        <taxon>Mycobacterium</taxon>
        <taxon>Mycobacterium tuberculosis complex</taxon>
    </lineage>
</organism>
<gene>
    <name type="ordered locus">BQ2027_MB0467</name>
</gene>
<reference key="1">
    <citation type="journal article" date="2003" name="Proc. Natl. Acad. Sci. U.S.A.">
        <title>The complete genome sequence of Mycobacterium bovis.</title>
        <authorList>
            <person name="Garnier T."/>
            <person name="Eiglmeier K."/>
            <person name="Camus J.-C."/>
            <person name="Medina N."/>
            <person name="Mansoor H."/>
            <person name="Pryor M."/>
            <person name="Duthoy S."/>
            <person name="Grondin S."/>
            <person name="Lacroix C."/>
            <person name="Monsempe C."/>
            <person name="Simon S."/>
            <person name="Harris B."/>
            <person name="Atkin R."/>
            <person name="Doggett J."/>
            <person name="Mayes R."/>
            <person name="Keating L."/>
            <person name="Wheeler P.R."/>
            <person name="Parkhill J."/>
            <person name="Barrell B.G."/>
            <person name="Cole S.T."/>
            <person name="Gordon S.V."/>
            <person name="Hewinson R.G."/>
        </authorList>
    </citation>
    <scope>NUCLEOTIDE SEQUENCE [LARGE SCALE GENOMIC DNA]</scope>
    <source>
        <strain>ATCC BAA-935 / AF2122/97</strain>
    </source>
</reference>
<reference key="2">
    <citation type="journal article" date="2017" name="Genome Announc.">
        <title>Updated reference genome sequence and annotation of Mycobacterium bovis AF2122/97.</title>
        <authorList>
            <person name="Malone K.M."/>
            <person name="Farrell D."/>
            <person name="Stuber T.P."/>
            <person name="Schubert O.T."/>
            <person name="Aebersold R."/>
            <person name="Robbe-Austerman S."/>
            <person name="Gordon S.V."/>
        </authorList>
    </citation>
    <scope>NUCLEOTIDE SEQUENCE [LARGE SCALE GENOMIC DNA]</scope>
    <scope>GENOME REANNOTATION</scope>
    <source>
        <strain>ATCC BAA-935 / AF2122/97</strain>
    </source>
</reference>
<evidence type="ECO:0000250" key="1"/>
<evidence type="ECO:0000305" key="2"/>
<name>ALDH_MYCBO</name>
<accession>P63938</accession>
<accession>A0A1R3XXK2</accession>
<accession>O53743</accession>
<accession>X2BF41</accession>
<proteinExistence type="inferred from homology"/>
<comment type="catalytic activity">
    <reaction>
        <text>an aldehyde + NAD(+) + H2O = a carboxylate + NADH + 2 H(+)</text>
        <dbReference type="Rhea" id="RHEA:16185"/>
        <dbReference type="ChEBI" id="CHEBI:15377"/>
        <dbReference type="ChEBI" id="CHEBI:15378"/>
        <dbReference type="ChEBI" id="CHEBI:17478"/>
        <dbReference type="ChEBI" id="CHEBI:29067"/>
        <dbReference type="ChEBI" id="CHEBI:57540"/>
        <dbReference type="ChEBI" id="CHEBI:57945"/>
        <dbReference type="EC" id="1.2.1.3"/>
    </reaction>
</comment>
<comment type="similarity">
    <text evidence="2">Belongs to the aldehyde dehydrogenase family.</text>
</comment>